<reference key="1">
    <citation type="journal article" date="2005" name="Nucleic Acids Res.">
        <title>Genomic blueprint of Hahella chejuensis, a marine microbe producing an algicidal agent.</title>
        <authorList>
            <person name="Jeong H."/>
            <person name="Yim J.H."/>
            <person name="Lee C."/>
            <person name="Choi S.-H."/>
            <person name="Park Y.K."/>
            <person name="Yoon S.H."/>
            <person name="Hur C.-G."/>
            <person name="Kang H.-Y."/>
            <person name="Kim D."/>
            <person name="Lee H.H."/>
            <person name="Park K.H."/>
            <person name="Park S.-H."/>
            <person name="Park H.-S."/>
            <person name="Lee H.K."/>
            <person name="Oh T.K."/>
            <person name="Kim J.F."/>
        </authorList>
    </citation>
    <scope>NUCLEOTIDE SEQUENCE [LARGE SCALE GENOMIC DNA]</scope>
    <source>
        <strain>KCTC 2396</strain>
    </source>
</reference>
<gene>
    <name evidence="1" type="primary">tsf</name>
    <name type="ordered locus">HCH_05252</name>
</gene>
<dbReference type="EMBL" id="CP000155">
    <property type="protein sequence ID" value="ABC31926.1"/>
    <property type="molecule type" value="Genomic_DNA"/>
</dbReference>
<dbReference type="RefSeq" id="WP_011398990.1">
    <property type="nucleotide sequence ID" value="NC_007645.1"/>
</dbReference>
<dbReference type="SMR" id="Q2SBP8"/>
<dbReference type="STRING" id="349521.HCH_05252"/>
<dbReference type="KEGG" id="hch:HCH_05252"/>
<dbReference type="eggNOG" id="COG0264">
    <property type="taxonomic scope" value="Bacteria"/>
</dbReference>
<dbReference type="HOGENOM" id="CLU_047155_0_2_6"/>
<dbReference type="OrthoDB" id="9808348at2"/>
<dbReference type="Proteomes" id="UP000000238">
    <property type="component" value="Chromosome"/>
</dbReference>
<dbReference type="GO" id="GO:0005737">
    <property type="term" value="C:cytoplasm"/>
    <property type="evidence" value="ECO:0007669"/>
    <property type="project" value="UniProtKB-SubCell"/>
</dbReference>
<dbReference type="GO" id="GO:0003746">
    <property type="term" value="F:translation elongation factor activity"/>
    <property type="evidence" value="ECO:0007669"/>
    <property type="project" value="UniProtKB-UniRule"/>
</dbReference>
<dbReference type="CDD" id="cd14275">
    <property type="entry name" value="UBA_EF-Ts"/>
    <property type="match status" value="1"/>
</dbReference>
<dbReference type="FunFam" id="1.10.286.20:FF:000001">
    <property type="entry name" value="Elongation factor Ts"/>
    <property type="match status" value="1"/>
</dbReference>
<dbReference type="FunFam" id="1.10.8.10:FF:000001">
    <property type="entry name" value="Elongation factor Ts"/>
    <property type="match status" value="1"/>
</dbReference>
<dbReference type="Gene3D" id="1.10.286.20">
    <property type="match status" value="1"/>
</dbReference>
<dbReference type="Gene3D" id="1.10.8.10">
    <property type="entry name" value="DNA helicase RuvA subunit, C-terminal domain"/>
    <property type="match status" value="1"/>
</dbReference>
<dbReference type="Gene3D" id="3.30.479.20">
    <property type="entry name" value="Elongation factor Ts, dimerisation domain"/>
    <property type="match status" value="2"/>
</dbReference>
<dbReference type="HAMAP" id="MF_00050">
    <property type="entry name" value="EF_Ts"/>
    <property type="match status" value="1"/>
</dbReference>
<dbReference type="InterPro" id="IPR036402">
    <property type="entry name" value="EF-Ts_dimer_sf"/>
</dbReference>
<dbReference type="InterPro" id="IPR001816">
    <property type="entry name" value="Transl_elong_EFTs/EF1B"/>
</dbReference>
<dbReference type="InterPro" id="IPR014039">
    <property type="entry name" value="Transl_elong_EFTs/EF1B_dimer"/>
</dbReference>
<dbReference type="InterPro" id="IPR018101">
    <property type="entry name" value="Transl_elong_Ts_CS"/>
</dbReference>
<dbReference type="InterPro" id="IPR009060">
    <property type="entry name" value="UBA-like_sf"/>
</dbReference>
<dbReference type="NCBIfam" id="TIGR00116">
    <property type="entry name" value="tsf"/>
    <property type="match status" value="1"/>
</dbReference>
<dbReference type="PANTHER" id="PTHR11741">
    <property type="entry name" value="ELONGATION FACTOR TS"/>
    <property type="match status" value="1"/>
</dbReference>
<dbReference type="PANTHER" id="PTHR11741:SF0">
    <property type="entry name" value="ELONGATION FACTOR TS, MITOCHONDRIAL"/>
    <property type="match status" value="1"/>
</dbReference>
<dbReference type="Pfam" id="PF00889">
    <property type="entry name" value="EF_TS"/>
    <property type="match status" value="1"/>
</dbReference>
<dbReference type="SUPFAM" id="SSF54713">
    <property type="entry name" value="Elongation factor Ts (EF-Ts), dimerisation domain"/>
    <property type="match status" value="2"/>
</dbReference>
<dbReference type="SUPFAM" id="SSF46934">
    <property type="entry name" value="UBA-like"/>
    <property type="match status" value="1"/>
</dbReference>
<dbReference type="PROSITE" id="PS01126">
    <property type="entry name" value="EF_TS_1"/>
    <property type="match status" value="1"/>
</dbReference>
<dbReference type="PROSITE" id="PS01127">
    <property type="entry name" value="EF_TS_2"/>
    <property type="match status" value="1"/>
</dbReference>
<proteinExistence type="inferred from homology"/>
<sequence>MAAISASMVKELRERTGLGMMECKKALVEAEGDIEKAIEDLRKSSGMKAAKKAGRVSADGVVAVKVSDDNSYAVVVEVNSETDFVARDENFLGFVGDVVGAAFDKKSADVAALMESGLEEKRQALVQKIGENINVRRASMLSSDVVGAYVHGNNRIAVLVALNGGNAELAKDIAMHIAAVNPQFVSRDDVSDEVIAKEREIYKAQADQSGKPAEIVDKMVDGRINKFLAEISLLEQAFVKDPDVKVGDLVKKAGAQVVAMVRYEVGEGIEKEEVDFAAEVAAQLKG</sequence>
<evidence type="ECO:0000255" key="1">
    <source>
        <dbReference type="HAMAP-Rule" id="MF_00050"/>
    </source>
</evidence>
<accession>Q2SBP8</accession>
<organism>
    <name type="scientific">Hahella chejuensis (strain KCTC 2396)</name>
    <dbReference type="NCBI Taxonomy" id="349521"/>
    <lineage>
        <taxon>Bacteria</taxon>
        <taxon>Pseudomonadati</taxon>
        <taxon>Pseudomonadota</taxon>
        <taxon>Gammaproteobacteria</taxon>
        <taxon>Oceanospirillales</taxon>
        <taxon>Hahellaceae</taxon>
        <taxon>Hahella</taxon>
    </lineage>
</organism>
<protein>
    <recommendedName>
        <fullName evidence="1">Elongation factor Ts</fullName>
        <shortName evidence="1">EF-Ts</shortName>
    </recommendedName>
</protein>
<name>EFTS_HAHCH</name>
<comment type="function">
    <text evidence="1">Associates with the EF-Tu.GDP complex and induces the exchange of GDP to GTP. It remains bound to the aminoacyl-tRNA.EF-Tu.GTP complex up to the GTP hydrolysis stage on the ribosome.</text>
</comment>
<comment type="subcellular location">
    <subcellularLocation>
        <location evidence="1">Cytoplasm</location>
    </subcellularLocation>
</comment>
<comment type="similarity">
    <text evidence="1">Belongs to the EF-Ts family.</text>
</comment>
<feature type="chain" id="PRO_0000241487" description="Elongation factor Ts">
    <location>
        <begin position="1"/>
        <end position="286"/>
    </location>
</feature>
<feature type="region of interest" description="Involved in Mg(2+) ion dislocation from EF-Tu" evidence="1">
    <location>
        <begin position="82"/>
        <end position="85"/>
    </location>
</feature>
<keyword id="KW-0963">Cytoplasm</keyword>
<keyword id="KW-0251">Elongation factor</keyword>
<keyword id="KW-0648">Protein biosynthesis</keyword>
<keyword id="KW-1185">Reference proteome</keyword>